<geneLocation type="mitochondrion"/>
<feature type="chain" id="PRO_0000061646" description="Cytochrome b">
    <location>
        <begin position="1"/>
        <end position="379"/>
    </location>
</feature>
<feature type="transmembrane region" description="Helical" evidence="2">
    <location>
        <begin position="33"/>
        <end position="53"/>
    </location>
</feature>
<feature type="transmembrane region" description="Helical" evidence="2">
    <location>
        <begin position="77"/>
        <end position="98"/>
    </location>
</feature>
<feature type="transmembrane region" description="Helical" evidence="2">
    <location>
        <begin position="113"/>
        <end position="133"/>
    </location>
</feature>
<feature type="transmembrane region" description="Helical" evidence="2">
    <location>
        <begin position="178"/>
        <end position="198"/>
    </location>
</feature>
<feature type="transmembrane region" description="Helical" evidence="2">
    <location>
        <begin position="226"/>
        <end position="246"/>
    </location>
</feature>
<feature type="transmembrane region" description="Helical" evidence="2">
    <location>
        <begin position="288"/>
        <end position="308"/>
    </location>
</feature>
<feature type="transmembrane region" description="Helical" evidence="2">
    <location>
        <begin position="320"/>
        <end position="340"/>
    </location>
</feature>
<feature type="transmembrane region" description="Helical" evidence="2">
    <location>
        <begin position="347"/>
        <end position="367"/>
    </location>
</feature>
<feature type="binding site" description="axial binding residue" evidence="2">
    <location>
        <position position="83"/>
    </location>
    <ligand>
        <name>heme b</name>
        <dbReference type="ChEBI" id="CHEBI:60344"/>
        <label>b562</label>
    </ligand>
    <ligandPart>
        <name>Fe</name>
        <dbReference type="ChEBI" id="CHEBI:18248"/>
    </ligandPart>
</feature>
<feature type="binding site" description="axial binding residue" evidence="2">
    <location>
        <position position="97"/>
    </location>
    <ligand>
        <name>heme b</name>
        <dbReference type="ChEBI" id="CHEBI:60344"/>
        <label>b566</label>
    </ligand>
    <ligandPart>
        <name>Fe</name>
        <dbReference type="ChEBI" id="CHEBI:18248"/>
    </ligandPart>
</feature>
<feature type="binding site" description="axial binding residue" evidence="2">
    <location>
        <position position="182"/>
    </location>
    <ligand>
        <name>heme b</name>
        <dbReference type="ChEBI" id="CHEBI:60344"/>
        <label>b562</label>
    </ligand>
    <ligandPart>
        <name>Fe</name>
        <dbReference type="ChEBI" id="CHEBI:18248"/>
    </ligandPart>
</feature>
<feature type="binding site" description="axial binding residue" evidence="2">
    <location>
        <position position="196"/>
    </location>
    <ligand>
        <name>heme b</name>
        <dbReference type="ChEBI" id="CHEBI:60344"/>
        <label>b566</label>
    </ligand>
    <ligandPart>
        <name>Fe</name>
        <dbReference type="ChEBI" id="CHEBI:18248"/>
    </ligandPart>
</feature>
<feature type="binding site" evidence="2">
    <location>
        <position position="201"/>
    </location>
    <ligand>
        <name>a ubiquinone</name>
        <dbReference type="ChEBI" id="CHEBI:16389"/>
    </ligand>
</feature>
<accession>O99343</accession>
<sequence length="379" mass="42779">MTNIRKSHPLMKIVNNAFIDLPAPSNISSWWNFGSLLGICLILQILTGLFLAMHYTSDTTTAFSSVTHICRDVNYGWIIRYMHANGASMFFICLYMHVGRGMYYGSYTFLETWNIGVILLFTVMATAFMGYVLPWGQMSFWGATVITNLLSAIPYIGTSLVEWIWGGFSVDKATLTRFFAFHFILPFIIAALAIVHLLFLHETGSNNPTGISSDMDKIPFHPYYTIKDILGALLLILALMLLVLFAPDLLGDPDNYTPANPLSTPPHIKPEWYFLFAYAILRLIPNKLGGVLALVLSILVLMLMPLLHTSKQRSMMFRPLSQCFFWILAADLLTLTWIGGQLVEHPYIIIGQLASIMYFLLILVLMPVASMIENNLLKW</sequence>
<keyword id="KW-0249">Electron transport</keyword>
<keyword id="KW-0349">Heme</keyword>
<keyword id="KW-0408">Iron</keyword>
<keyword id="KW-0472">Membrane</keyword>
<keyword id="KW-0479">Metal-binding</keyword>
<keyword id="KW-0496">Mitochondrion</keyword>
<keyword id="KW-0999">Mitochondrion inner membrane</keyword>
<keyword id="KW-0679">Respiratory chain</keyword>
<keyword id="KW-0812">Transmembrane</keyword>
<keyword id="KW-1133">Transmembrane helix</keyword>
<keyword id="KW-0813">Transport</keyword>
<keyword id="KW-0830">Ubiquinone</keyword>
<evidence type="ECO:0000250" key="1"/>
<evidence type="ECO:0000250" key="2">
    <source>
        <dbReference type="UniProtKB" id="P00157"/>
    </source>
</evidence>
<evidence type="ECO:0000255" key="3">
    <source>
        <dbReference type="PROSITE-ProRule" id="PRU00967"/>
    </source>
</evidence>
<evidence type="ECO:0000255" key="4">
    <source>
        <dbReference type="PROSITE-ProRule" id="PRU00968"/>
    </source>
</evidence>
<name>CYB_TAUDE</name>
<comment type="function">
    <text evidence="2">Component of the ubiquinol-cytochrome c reductase complex (complex III or cytochrome b-c1 complex) that is part of the mitochondrial respiratory chain. The b-c1 complex mediates electron transfer from ubiquinol to cytochrome c. Contributes to the generation of a proton gradient across the mitochondrial membrane that is then used for ATP synthesis.</text>
</comment>
<comment type="cofactor">
    <cofactor evidence="2">
        <name>heme b</name>
        <dbReference type="ChEBI" id="CHEBI:60344"/>
    </cofactor>
    <text evidence="2">Binds 2 heme b groups non-covalently.</text>
</comment>
<comment type="subunit">
    <text evidence="2">The cytochrome bc1 complex contains 11 subunits: 3 respiratory subunits (MT-CYB, CYC1 and UQCRFS1), 2 core proteins (UQCRC1 and UQCRC2) and 6 low-molecular weight proteins (UQCRH/QCR6, UQCRB/QCR7, UQCRQ/QCR8, UQCR10/QCR9, UQCR11/QCR10 and a cleavage product of UQCRFS1). This cytochrome bc1 complex then forms a dimer.</text>
</comment>
<comment type="subcellular location">
    <subcellularLocation>
        <location evidence="2">Mitochondrion inner membrane</location>
        <topology evidence="2">Multi-pass membrane protein</topology>
    </subcellularLocation>
</comment>
<comment type="miscellaneous">
    <text evidence="1">Heme 1 (or BL or b562) is low-potential and absorbs at about 562 nm, and heme 2 (or BH or b566) is high-potential and absorbs at about 566 nm.</text>
</comment>
<comment type="similarity">
    <text evidence="3 4">Belongs to the cytochrome b family.</text>
</comment>
<comment type="caution">
    <text evidence="2">The full-length protein contains only eight transmembrane helices, not nine as predicted by bioinformatics tools.</text>
</comment>
<gene>
    <name type="primary">MT-CYB</name>
    <name type="synonym">COB</name>
    <name type="synonym">CYTB</name>
    <name type="synonym">MTCYB</name>
</gene>
<dbReference type="EMBL" id="AF022062">
    <property type="protein sequence ID" value="AAD13496.1"/>
    <property type="molecule type" value="Genomic_DNA"/>
</dbReference>
<dbReference type="SMR" id="O99343"/>
<dbReference type="GO" id="GO:0005743">
    <property type="term" value="C:mitochondrial inner membrane"/>
    <property type="evidence" value="ECO:0007669"/>
    <property type="project" value="UniProtKB-SubCell"/>
</dbReference>
<dbReference type="GO" id="GO:0045275">
    <property type="term" value="C:respiratory chain complex III"/>
    <property type="evidence" value="ECO:0007669"/>
    <property type="project" value="InterPro"/>
</dbReference>
<dbReference type="GO" id="GO:0046872">
    <property type="term" value="F:metal ion binding"/>
    <property type="evidence" value="ECO:0007669"/>
    <property type="project" value="UniProtKB-KW"/>
</dbReference>
<dbReference type="GO" id="GO:0008121">
    <property type="term" value="F:ubiquinol-cytochrome-c reductase activity"/>
    <property type="evidence" value="ECO:0007669"/>
    <property type="project" value="InterPro"/>
</dbReference>
<dbReference type="GO" id="GO:0006122">
    <property type="term" value="P:mitochondrial electron transport, ubiquinol to cytochrome c"/>
    <property type="evidence" value="ECO:0007669"/>
    <property type="project" value="TreeGrafter"/>
</dbReference>
<dbReference type="CDD" id="cd00290">
    <property type="entry name" value="cytochrome_b_C"/>
    <property type="match status" value="1"/>
</dbReference>
<dbReference type="CDD" id="cd00284">
    <property type="entry name" value="Cytochrome_b_N"/>
    <property type="match status" value="1"/>
</dbReference>
<dbReference type="FunFam" id="1.20.810.10:FF:000002">
    <property type="entry name" value="Cytochrome b"/>
    <property type="match status" value="1"/>
</dbReference>
<dbReference type="Gene3D" id="1.20.810.10">
    <property type="entry name" value="Cytochrome Bc1 Complex, Chain C"/>
    <property type="match status" value="1"/>
</dbReference>
<dbReference type="InterPro" id="IPR005798">
    <property type="entry name" value="Cyt_b/b6_C"/>
</dbReference>
<dbReference type="InterPro" id="IPR036150">
    <property type="entry name" value="Cyt_b/b6_C_sf"/>
</dbReference>
<dbReference type="InterPro" id="IPR005797">
    <property type="entry name" value="Cyt_b/b6_N"/>
</dbReference>
<dbReference type="InterPro" id="IPR027387">
    <property type="entry name" value="Cytb/b6-like_sf"/>
</dbReference>
<dbReference type="InterPro" id="IPR030689">
    <property type="entry name" value="Cytochrome_b"/>
</dbReference>
<dbReference type="InterPro" id="IPR048260">
    <property type="entry name" value="Cytochrome_b_C_euk/bac"/>
</dbReference>
<dbReference type="InterPro" id="IPR048259">
    <property type="entry name" value="Cytochrome_b_N_euk/bac"/>
</dbReference>
<dbReference type="InterPro" id="IPR016174">
    <property type="entry name" value="Di-haem_cyt_TM"/>
</dbReference>
<dbReference type="PANTHER" id="PTHR19271">
    <property type="entry name" value="CYTOCHROME B"/>
    <property type="match status" value="1"/>
</dbReference>
<dbReference type="PANTHER" id="PTHR19271:SF16">
    <property type="entry name" value="CYTOCHROME B"/>
    <property type="match status" value="1"/>
</dbReference>
<dbReference type="Pfam" id="PF00032">
    <property type="entry name" value="Cytochrom_B_C"/>
    <property type="match status" value="1"/>
</dbReference>
<dbReference type="Pfam" id="PF00033">
    <property type="entry name" value="Cytochrome_B"/>
    <property type="match status" value="1"/>
</dbReference>
<dbReference type="PIRSF" id="PIRSF038885">
    <property type="entry name" value="COB"/>
    <property type="match status" value="1"/>
</dbReference>
<dbReference type="SUPFAM" id="SSF81648">
    <property type="entry name" value="a domain/subunit of cytochrome bc1 complex (Ubiquinol-cytochrome c reductase)"/>
    <property type="match status" value="1"/>
</dbReference>
<dbReference type="SUPFAM" id="SSF81342">
    <property type="entry name" value="Transmembrane di-heme cytochromes"/>
    <property type="match status" value="1"/>
</dbReference>
<dbReference type="PROSITE" id="PS51003">
    <property type="entry name" value="CYTB_CTER"/>
    <property type="match status" value="1"/>
</dbReference>
<dbReference type="PROSITE" id="PS51002">
    <property type="entry name" value="CYTB_NTER"/>
    <property type="match status" value="1"/>
</dbReference>
<protein>
    <recommendedName>
        <fullName>Cytochrome b</fullName>
    </recommendedName>
    <alternativeName>
        <fullName>Complex III subunit 3</fullName>
    </alternativeName>
    <alternativeName>
        <fullName>Complex III subunit III</fullName>
    </alternativeName>
    <alternativeName>
        <fullName>Cytochrome b-c1 complex subunit 3</fullName>
    </alternativeName>
    <alternativeName>
        <fullName>Ubiquinol-cytochrome-c reductase complex cytochrome b subunit</fullName>
    </alternativeName>
</protein>
<proteinExistence type="inferred from homology"/>
<reference key="1">
    <citation type="journal article" date="1999" name="Mol. Phylogenet. Evol.">
        <title>Cytochrome b phylogeny of the family bovidae: resolution within the alcelaphini, antilopini, neotragini, and tragelaphini.</title>
        <authorList>
            <person name="Matthee C.A."/>
            <person name="Robinson T.J."/>
        </authorList>
    </citation>
    <scope>NUCLEOTIDE SEQUENCE [GENOMIC DNA]</scope>
</reference>
<organism>
    <name type="scientific">Taurotragus derbianus</name>
    <name type="common">Giant eland</name>
    <name type="synonym">Derby eland</name>
    <dbReference type="NCBI Taxonomy" id="303930"/>
    <lineage>
        <taxon>Eukaryota</taxon>
        <taxon>Metazoa</taxon>
        <taxon>Chordata</taxon>
        <taxon>Craniata</taxon>
        <taxon>Vertebrata</taxon>
        <taxon>Euteleostomi</taxon>
        <taxon>Mammalia</taxon>
        <taxon>Eutheria</taxon>
        <taxon>Laurasiatheria</taxon>
        <taxon>Artiodactyla</taxon>
        <taxon>Ruminantia</taxon>
        <taxon>Pecora</taxon>
        <taxon>Bovidae</taxon>
        <taxon>Bovinae</taxon>
        <taxon>Taurotragus</taxon>
    </lineage>
</organism>